<organism>
    <name type="scientific">Mycobacterium leprae (strain TN)</name>
    <dbReference type="NCBI Taxonomy" id="272631"/>
    <lineage>
        <taxon>Bacteria</taxon>
        <taxon>Bacillati</taxon>
        <taxon>Actinomycetota</taxon>
        <taxon>Actinomycetes</taxon>
        <taxon>Mycobacteriales</taxon>
        <taxon>Mycobacteriaceae</taxon>
        <taxon>Mycobacterium</taxon>
    </lineage>
</organism>
<keyword id="KW-1003">Cell membrane</keyword>
<keyword id="KW-0350">Heme biosynthesis</keyword>
<keyword id="KW-0472">Membrane</keyword>
<keyword id="KW-1185">Reference proteome</keyword>
<keyword id="KW-0808">Transferase</keyword>
<keyword id="KW-0812">Transmembrane</keyword>
<keyword id="KW-1133">Transmembrane helix</keyword>
<proteinExistence type="inferred from homology"/>
<accession>Q9CCN4</accession>
<name>COXX_MYCLE</name>
<evidence type="ECO:0000255" key="1">
    <source>
        <dbReference type="HAMAP-Rule" id="MF_00154"/>
    </source>
</evidence>
<evidence type="ECO:0000305" key="2"/>
<comment type="function">
    <text evidence="1">Converts heme B (protoheme IX) to heme O by substitution of the vinyl group on carbon 2 of heme B porphyrin ring with a hydroxyethyl farnesyl side group.</text>
</comment>
<comment type="catalytic activity">
    <reaction evidence="1">
        <text>heme b + (2E,6E)-farnesyl diphosphate + H2O = Fe(II)-heme o + diphosphate</text>
        <dbReference type="Rhea" id="RHEA:28070"/>
        <dbReference type="ChEBI" id="CHEBI:15377"/>
        <dbReference type="ChEBI" id="CHEBI:33019"/>
        <dbReference type="ChEBI" id="CHEBI:60344"/>
        <dbReference type="ChEBI" id="CHEBI:60530"/>
        <dbReference type="ChEBI" id="CHEBI:175763"/>
        <dbReference type="EC" id="2.5.1.141"/>
    </reaction>
</comment>
<comment type="pathway">
    <text evidence="1">Porphyrin-containing compound metabolism; heme O biosynthesis; heme O from protoheme: step 1/1.</text>
</comment>
<comment type="subcellular location">
    <subcellularLocation>
        <location evidence="1">Cell membrane</location>
        <topology evidence="1">Multi-pass membrane protein</topology>
    </subcellularLocation>
</comment>
<comment type="miscellaneous">
    <text evidence="1">Carbon 2 of the heme B porphyrin ring is defined according to the Fischer nomenclature.</text>
</comment>
<comment type="similarity">
    <text evidence="1">Belongs to the UbiA prenyltransferase family. Protoheme IX farnesyltransferase subfamily.</text>
</comment>
<comment type="sequence caution" evidence="2">
    <conflict type="erroneous initiation">
        <sequence resource="EMBL-CDS" id="CAC30092"/>
    </conflict>
</comment>
<sequence>MRSRGVKYVSVRARLARSRVLAYLALTKPRVIELLLVTAIPAMLLADRGSANPLLILNTLLGGISAAAGANTFNCVADADIDKLMKRTSRRPLARAAVPPRNALVLGLALTAGSFFWLWWTTNLLSGLLALATVAFYVFVYTLLLKRRTSQNVVWGGAAGCMPVMIGWSAITDTIGWPALAMFAIIFFWTPPHTWALAMRYKDDYKVASVPMLPAVATERHVTKQILIYTWLTALSTLVLALATGWLYMAVAVVAGAWFLTMAHQLYVGVCAGEPVKPLRLFLQSNNYLAVVFCALAVDSVLALPTLF</sequence>
<protein>
    <recommendedName>
        <fullName evidence="1">Protoheme IX farnesyltransferase</fullName>
        <ecNumber evidence="1">2.5.1.141</ecNumber>
    </recommendedName>
    <alternativeName>
        <fullName evidence="1">Heme B farnesyltransferase</fullName>
    </alternativeName>
    <alternativeName>
        <fullName evidence="1">Heme O synthase</fullName>
    </alternativeName>
</protein>
<gene>
    <name evidence="1" type="primary">ctaB</name>
    <name type="ordered locus">ML0584</name>
</gene>
<reference key="1">
    <citation type="journal article" date="2001" name="Nature">
        <title>Massive gene decay in the leprosy bacillus.</title>
        <authorList>
            <person name="Cole S.T."/>
            <person name="Eiglmeier K."/>
            <person name="Parkhill J."/>
            <person name="James K.D."/>
            <person name="Thomson N.R."/>
            <person name="Wheeler P.R."/>
            <person name="Honore N."/>
            <person name="Garnier T."/>
            <person name="Churcher C.M."/>
            <person name="Harris D.E."/>
            <person name="Mungall K.L."/>
            <person name="Basham D."/>
            <person name="Brown D."/>
            <person name="Chillingworth T."/>
            <person name="Connor R."/>
            <person name="Davies R.M."/>
            <person name="Devlin K."/>
            <person name="Duthoy S."/>
            <person name="Feltwell T."/>
            <person name="Fraser A."/>
            <person name="Hamlin N."/>
            <person name="Holroyd S."/>
            <person name="Hornsby T."/>
            <person name="Jagels K."/>
            <person name="Lacroix C."/>
            <person name="Maclean J."/>
            <person name="Moule S."/>
            <person name="Murphy L.D."/>
            <person name="Oliver K."/>
            <person name="Quail M.A."/>
            <person name="Rajandream M.A."/>
            <person name="Rutherford K.M."/>
            <person name="Rutter S."/>
            <person name="Seeger K."/>
            <person name="Simon S."/>
            <person name="Simmonds M."/>
            <person name="Skelton J."/>
            <person name="Squares R."/>
            <person name="Squares S."/>
            <person name="Stevens K."/>
            <person name="Taylor K."/>
            <person name="Whitehead S."/>
            <person name="Woodward J.R."/>
            <person name="Barrell B.G."/>
        </authorList>
    </citation>
    <scope>NUCLEOTIDE SEQUENCE [LARGE SCALE GENOMIC DNA]</scope>
    <source>
        <strain>TN</strain>
    </source>
</reference>
<dbReference type="EC" id="2.5.1.141" evidence="1"/>
<dbReference type="EMBL" id="AL583919">
    <property type="protein sequence ID" value="CAC30092.1"/>
    <property type="status" value="ALT_INIT"/>
    <property type="molecule type" value="Genomic_DNA"/>
</dbReference>
<dbReference type="PIR" id="H86981">
    <property type="entry name" value="H86981"/>
</dbReference>
<dbReference type="RefSeq" id="WP_010907819.1">
    <property type="nucleotide sequence ID" value="NC_002677.1"/>
</dbReference>
<dbReference type="SMR" id="Q9CCN4"/>
<dbReference type="STRING" id="272631.gene:17574405"/>
<dbReference type="KEGG" id="mle:ML0584"/>
<dbReference type="Leproma" id="ML0584"/>
<dbReference type="eggNOG" id="COG0109">
    <property type="taxonomic scope" value="Bacteria"/>
</dbReference>
<dbReference type="HOGENOM" id="CLU_029631_0_1_11"/>
<dbReference type="UniPathway" id="UPA00834">
    <property type="reaction ID" value="UER00712"/>
</dbReference>
<dbReference type="Proteomes" id="UP000000806">
    <property type="component" value="Chromosome"/>
</dbReference>
<dbReference type="GO" id="GO:0005886">
    <property type="term" value="C:plasma membrane"/>
    <property type="evidence" value="ECO:0007669"/>
    <property type="project" value="UniProtKB-SubCell"/>
</dbReference>
<dbReference type="GO" id="GO:0008495">
    <property type="term" value="F:protoheme IX farnesyltransferase activity"/>
    <property type="evidence" value="ECO:0007669"/>
    <property type="project" value="UniProtKB-UniRule"/>
</dbReference>
<dbReference type="GO" id="GO:0048034">
    <property type="term" value="P:heme O biosynthetic process"/>
    <property type="evidence" value="ECO:0007669"/>
    <property type="project" value="UniProtKB-UniRule"/>
</dbReference>
<dbReference type="CDD" id="cd13957">
    <property type="entry name" value="PT_UbiA_Cox10"/>
    <property type="match status" value="1"/>
</dbReference>
<dbReference type="FunFam" id="1.10.357.140:FF:000001">
    <property type="entry name" value="Protoheme IX farnesyltransferase"/>
    <property type="match status" value="1"/>
</dbReference>
<dbReference type="Gene3D" id="1.10.357.140">
    <property type="entry name" value="UbiA prenyltransferase"/>
    <property type="match status" value="1"/>
</dbReference>
<dbReference type="HAMAP" id="MF_00154">
    <property type="entry name" value="CyoE_CtaB"/>
    <property type="match status" value="1"/>
</dbReference>
<dbReference type="InterPro" id="IPR006369">
    <property type="entry name" value="Protohaem_IX_farnesylTrfase"/>
</dbReference>
<dbReference type="InterPro" id="IPR000537">
    <property type="entry name" value="UbiA_prenyltransferase"/>
</dbReference>
<dbReference type="InterPro" id="IPR044878">
    <property type="entry name" value="UbiA_sf"/>
</dbReference>
<dbReference type="NCBIfam" id="TIGR01473">
    <property type="entry name" value="cyoE_ctaB"/>
    <property type="match status" value="1"/>
</dbReference>
<dbReference type="NCBIfam" id="NF003349">
    <property type="entry name" value="PRK04375.1-2"/>
    <property type="match status" value="1"/>
</dbReference>
<dbReference type="PANTHER" id="PTHR43448:SF7">
    <property type="entry name" value="4-HYDROXYBENZOATE SOLANESYLTRANSFERASE"/>
    <property type="match status" value="1"/>
</dbReference>
<dbReference type="PANTHER" id="PTHR43448">
    <property type="entry name" value="PROTOHEME IX FARNESYLTRANSFERASE, MITOCHONDRIAL"/>
    <property type="match status" value="1"/>
</dbReference>
<dbReference type="Pfam" id="PF01040">
    <property type="entry name" value="UbiA"/>
    <property type="match status" value="1"/>
</dbReference>
<feature type="chain" id="PRO_0000327084" description="Protoheme IX farnesyltransferase">
    <location>
        <begin position="1"/>
        <end position="308"/>
    </location>
</feature>
<feature type="transmembrane region" description="Helical" evidence="1">
    <location>
        <begin position="20"/>
        <end position="40"/>
    </location>
</feature>
<feature type="transmembrane region" description="Helical" evidence="1">
    <location>
        <begin position="53"/>
        <end position="73"/>
    </location>
</feature>
<feature type="transmembrane region" description="Helical" evidence="1">
    <location>
        <begin position="102"/>
        <end position="122"/>
    </location>
</feature>
<feature type="transmembrane region" description="Helical" evidence="1">
    <location>
        <begin position="124"/>
        <end position="144"/>
    </location>
</feature>
<feature type="transmembrane region" description="Helical" evidence="1">
    <location>
        <begin position="149"/>
        <end position="169"/>
    </location>
</feature>
<feature type="transmembrane region" description="Helical" evidence="1">
    <location>
        <begin position="170"/>
        <end position="190"/>
    </location>
</feature>
<feature type="transmembrane region" description="Helical" evidence="1">
    <location>
        <begin position="227"/>
        <end position="249"/>
    </location>
</feature>
<feature type="transmembrane region" description="Helical" evidence="1">
    <location>
        <begin position="254"/>
        <end position="276"/>
    </location>
</feature>
<feature type="transmembrane region" description="Helical" evidence="1">
    <location>
        <begin position="288"/>
        <end position="308"/>
    </location>
</feature>